<keyword id="KW-0167">Capsid protein</keyword>
<keyword id="KW-0426">Late protein</keyword>
<keyword id="KW-0946">Virion</keyword>
<protein>
    <recommendedName>
        <fullName>Major capsid protein</fullName>
        <shortName>MCP</shortName>
    </recommendedName>
    <alternativeName>
        <fullName>P50</fullName>
    </alternativeName>
</protein>
<evidence type="ECO:0000250" key="1"/>
<evidence type="ECO:0000305" key="2"/>
<comment type="function">
    <text evidence="1">Major capsid protein that self assembles to form an icosahedral capsid. Represents around 50% of the total virion protein mass (By similarity).</text>
</comment>
<comment type="subunit">
    <text evidence="1">Homotrimer.</text>
</comment>
<comment type="subcellular location">
    <subcellularLocation>
        <location evidence="2">Virion</location>
    </subcellularLocation>
</comment>
<comment type="similarity">
    <text evidence="2">Belongs to the NCLDV major capsid protein family.</text>
</comment>
<organismHost>
    <name type="scientific">Costelytra zealandica</name>
    <dbReference type="NCBI Taxonomy" id="50579"/>
</organismHost>
<name>MCP_IRV16</name>
<accession>O39164</accession>
<gene>
    <name type="primary">MCP</name>
</gene>
<organism>
    <name type="scientific">Costelytra zealandica iridescent virus</name>
    <name type="common">CzIV</name>
    <name type="synonym">Insect iridescent virus type 16</name>
    <dbReference type="NCBI Taxonomy" id="68348"/>
    <lineage>
        <taxon>Viruses</taxon>
        <taxon>Varidnaviria</taxon>
        <taxon>Bamfordvirae</taxon>
        <taxon>Nucleocytoviricota</taxon>
        <taxon>Megaviricetes</taxon>
        <taxon>Pimascovirales</taxon>
        <taxon>Iridoviridae</taxon>
        <taxon>Betairidovirinae</taxon>
        <taxon>Iridovirus</taxon>
        <taxon>Invertebrate iridescent virus 16</taxon>
    </lineage>
</organism>
<dbReference type="EMBL" id="AF025775">
    <property type="protein sequence ID" value="AAB82569.1"/>
    <property type="molecule type" value="Genomic_DNA"/>
</dbReference>
<dbReference type="SMR" id="O39164"/>
<dbReference type="GO" id="GO:0019028">
    <property type="term" value="C:viral capsid"/>
    <property type="evidence" value="ECO:0007669"/>
    <property type="project" value="UniProtKB-KW"/>
</dbReference>
<dbReference type="GO" id="GO:0005198">
    <property type="term" value="F:structural molecule activity"/>
    <property type="evidence" value="ECO:0007669"/>
    <property type="project" value="InterPro"/>
</dbReference>
<dbReference type="Gene3D" id="2.70.9.10">
    <property type="entry name" value="Adenovirus Type 2 Hexon, domain 4"/>
    <property type="match status" value="1"/>
</dbReference>
<dbReference type="Gene3D" id="2.70.9.20">
    <property type="entry name" value="Major capsid protein Vp54"/>
    <property type="match status" value="1"/>
</dbReference>
<dbReference type="InterPro" id="IPR031654">
    <property type="entry name" value="Capsid_N"/>
</dbReference>
<dbReference type="InterPro" id="IPR007542">
    <property type="entry name" value="MCP_C"/>
</dbReference>
<dbReference type="InterPro" id="IPR038519">
    <property type="entry name" value="MCP_C_sf"/>
</dbReference>
<dbReference type="InterPro" id="IPR016112">
    <property type="entry name" value="VP_dsDNA_II"/>
</dbReference>
<dbReference type="Pfam" id="PF16903">
    <property type="entry name" value="Capsid_N"/>
    <property type="match status" value="1"/>
</dbReference>
<dbReference type="Pfam" id="PF04451">
    <property type="entry name" value="Capsid_NCLDV"/>
    <property type="match status" value="1"/>
</dbReference>
<dbReference type="SUPFAM" id="SSF49749">
    <property type="entry name" value="Group II dsDNA viruses VP"/>
    <property type="match status" value="2"/>
</dbReference>
<feature type="chain" id="PRO_0000222383" description="Major capsid protein">
    <location>
        <begin position="1"/>
        <end position="462"/>
    </location>
</feature>
<sequence>MSMSSSNITSGFIDIATFDEIEKYMYGGPTATAYFVREIRKSTWFTQVPVPLSRNTGNAAFGQEWSVSISRAGDYLLQTWLRVNIPQVTLNAQLGPTFGLRWTRNFMHNLIREATITFNDLVAARFDNYHLDFWSAFTVPASKKIGYDNMIGNISALTNPVAPGGSLGSVGGINLNLPLPFFFSRDTGVALPTAALPYNEMQINFNFRDWPELLILTNTALVPPASPYVPIVVGTHLSAAPVLGAVQVWANYAIVSNEERRRMGCAIRDILIEQVQTAPRQNYTPLTNAMPTFDIRFSHAIKALFFSVRNKTSSAEWSNYATSSPVVTGQLVNYEPPGAFDPISNTTLIYENTNRLGAMGSDYFSLINPFYHAPTIPSSIGYHLYSYSLHFFDLDPMGSTNYGKLTNVSVVPQASPAAVTAAGGSGAAGSGADYAQSYEFVIIGVNNNIIRISGGALGFPVL</sequence>
<proteinExistence type="inferred from homology"/>
<reference key="1">
    <citation type="journal article" date="1999" name="Virus Res.">
        <title>Comparison of the major capsid protein genes, terminal redundancies, and DNA-DNA homologies of two New Zealand iridoviruses.</title>
        <authorList>
            <person name="Webby R.J."/>
            <person name="Kalmakoff J."/>
        </authorList>
    </citation>
    <scope>NUCLEOTIDE SEQUENCE [GENOMIC DNA]</scope>
</reference>